<keyword id="KW-0150">Chloroplast</keyword>
<keyword id="KW-0934">Plastid</keyword>
<keyword id="KW-0809">Transit peptide</keyword>
<name>PAP_CITUN</name>
<organism>
    <name type="scientific">Citrus unshiu</name>
    <name type="common">Satsuma mandarin</name>
    <name type="synonym">Citrus nobilis var. unshiu</name>
    <dbReference type="NCBI Taxonomy" id="55188"/>
    <lineage>
        <taxon>Eukaryota</taxon>
        <taxon>Viridiplantae</taxon>
        <taxon>Streptophyta</taxon>
        <taxon>Embryophyta</taxon>
        <taxon>Tracheophyta</taxon>
        <taxon>Spermatophyta</taxon>
        <taxon>Magnoliopsida</taxon>
        <taxon>eudicotyledons</taxon>
        <taxon>Gunneridae</taxon>
        <taxon>Pentapetalae</taxon>
        <taxon>rosids</taxon>
        <taxon>malvids</taxon>
        <taxon>Sapindales</taxon>
        <taxon>Rutaceae</taxon>
        <taxon>Aurantioideae</taxon>
        <taxon>Citrus</taxon>
    </lineage>
</organism>
<accession>Q9ZWQ8</accession>
<proteinExistence type="evidence at transcript level"/>
<feature type="transit peptide" description="Chloroplast" evidence="1">
    <location>
        <begin position="1"/>
        <end position="63"/>
    </location>
</feature>
<feature type="chain" id="PRO_0000023213" description="Plastid-lipid-associated protein, chloroplastic">
    <location>
        <begin position="64"/>
        <end position="323"/>
    </location>
</feature>
<feature type="region of interest" description="Disordered" evidence="2">
    <location>
        <begin position="1"/>
        <end position="28"/>
    </location>
</feature>
<feature type="region of interest" description="Disordered" evidence="2">
    <location>
        <begin position="66"/>
        <end position="88"/>
    </location>
</feature>
<protein>
    <recommendedName>
        <fullName>Plastid-lipid-associated protein, chloroplastic</fullName>
    </recommendedName>
    <alternativeName>
        <fullName>CitPAP</fullName>
    </alternativeName>
</protein>
<comment type="subcellular location">
    <subcellularLocation>
        <location evidence="4">Plastid</location>
        <location evidence="4">Chloroplast</location>
    </subcellularLocation>
</comment>
<comment type="tissue specificity">
    <text evidence="3">Constitutively expressed in flowers, leaves, and fruits.</text>
</comment>
<comment type="developmental stage">
    <text evidence="3">Low expression in fruit until the onset of peel color change, and then increases toward ripening.</text>
</comment>
<comment type="similarity">
    <text evidence="4">Belongs to the PAP/fibrillin family.</text>
</comment>
<evidence type="ECO:0000255" key="1"/>
<evidence type="ECO:0000256" key="2">
    <source>
        <dbReference type="SAM" id="MobiDB-lite"/>
    </source>
</evidence>
<evidence type="ECO:0000269" key="3">
    <source>
    </source>
</evidence>
<evidence type="ECO:0000305" key="4"/>
<dbReference type="EMBL" id="AB011797">
    <property type="protein sequence ID" value="BAA34702.1"/>
    <property type="molecule type" value="mRNA"/>
</dbReference>
<dbReference type="SMR" id="Q9ZWQ8"/>
<dbReference type="GO" id="GO:0009507">
    <property type="term" value="C:chloroplast"/>
    <property type="evidence" value="ECO:0007669"/>
    <property type="project" value="UniProtKB-SubCell"/>
</dbReference>
<dbReference type="InterPro" id="IPR039633">
    <property type="entry name" value="PAP"/>
</dbReference>
<dbReference type="InterPro" id="IPR006843">
    <property type="entry name" value="PAP/fibrillin_dom"/>
</dbReference>
<dbReference type="PANTHER" id="PTHR31906">
    <property type="entry name" value="PLASTID-LIPID-ASSOCIATED PROTEIN 4, CHLOROPLASTIC-RELATED"/>
    <property type="match status" value="1"/>
</dbReference>
<dbReference type="Pfam" id="PF04755">
    <property type="entry name" value="PAP_fibrillin"/>
    <property type="match status" value="1"/>
</dbReference>
<gene>
    <name type="primary">PAP</name>
</gene>
<reference key="1">
    <citation type="journal article" date="1998" name="Biochim. Biophys. Acta">
        <title>Characterization of a cDNA homologous to carotenoid-associated protein in citrus fruits.</title>
        <authorList>
            <person name="Moriguchi T."/>
            <person name="Kita M."/>
            <person name="Endo-Inagaki T."/>
            <person name="Ikoma Y."/>
            <person name="Omura M."/>
        </authorList>
    </citation>
    <scope>NUCLEOTIDE SEQUENCE [MRNA]</scope>
    <scope>TISSUE SPECIFICITY</scope>
    <scope>DEVELOPMENTAL STAGE</scope>
</reference>
<sequence length="323" mass="35217">MASISQTNQFPCKTLSQNPPHNQFTSKPSILPLNSVRISRSLAKKSFLSIQGFTRARPLVLTRAADDDEWGPEKEKEGGGALAVAEEESPKEVTEIDNLKKALVDSFYGTDRGLNATSETRAEIVELITQLEAKNPTPAPTEALTLLNAKWILVYTSFSGLFPLLSRGTLPLARVEEISQTIDSENFTVQNSIQFAGPLATTSISTNAKFEVRSPKRVQIKFEEGVIGTPQVTDSLVLPENVEFLGQKIDLSPFKGILSSVQDTASSVAKTISSQPPLKFSISNSNAQSWLLTTYLDEDLRISRADAGSVFVFIKEGSPLLMP</sequence>